<proteinExistence type="inferred from homology"/>
<keyword id="KW-0249">Electron transport</keyword>
<keyword id="KW-0472">Membrane</keyword>
<keyword id="KW-0496">Mitochondrion</keyword>
<keyword id="KW-0520">NAD</keyword>
<keyword id="KW-0679">Respiratory chain</keyword>
<keyword id="KW-1278">Translocase</keyword>
<keyword id="KW-0812">Transmembrane</keyword>
<keyword id="KW-1133">Transmembrane helix</keyword>
<keyword id="KW-0813">Transport</keyword>
<keyword id="KW-0830">Ubiquinone</keyword>
<accession>Q34076</accession>
<sequence length="111" mass="12070">GLQLTSPLLTAWWFLACSTNMALPPTINLSGELTLITSLFSWLDITVFLTGLSAFATTTYTLYMFSSTQQGTLPPNIKPSSPSQTREHFLMLLHLLPSAGLATNPKLTAPQ</sequence>
<geneLocation type="mitochondrion"/>
<name>NU4M_CAICR</name>
<gene>
    <name type="primary">MT-ND4</name>
    <name type="synonym">MTND4</name>
    <name type="synonym">NADH4</name>
    <name type="synonym">ND4</name>
</gene>
<evidence type="ECO:0000250" key="1"/>
<evidence type="ECO:0000255" key="2"/>
<evidence type="ECO:0000305" key="3"/>
<protein>
    <recommendedName>
        <fullName>NADH-ubiquinone oxidoreductase chain 4</fullName>
        <ecNumber>7.1.1.2</ecNumber>
    </recommendedName>
    <alternativeName>
        <fullName>NADH dehydrogenase subunit 4</fullName>
    </alternativeName>
</protein>
<dbReference type="EC" id="7.1.1.2"/>
<dbReference type="EMBL" id="D38190">
    <property type="protein sequence ID" value="BAA07383.1"/>
    <property type="molecule type" value="Genomic_DNA"/>
</dbReference>
<dbReference type="SMR" id="Q34076"/>
<dbReference type="GO" id="GO:0031966">
    <property type="term" value="C:mitochondrial membrane"/>
    <property type="evidence" value="ECO:0007669"/>
    <property type="project" value="UniProtKB-SubCell"/>
</dbReference>
<dbReference type="GO" id="GO:0008137">
    <property type="term" value="F:NADH dehydrogenase (ubiquinone) activity"/>
    <property type="evidence" value="ECO:0007669"/>
    <property type="project" value="UniProtKB-EC"/>
</dbReference>
<dbReference type="GO" id="GO:0048039">
    <property type="term" value="F:ubiquinone binding"/>
    <property type="evidence" value="ECO:0007669"/>
    <property type="project" value="TreeGrafter"/>
</dbReference>
<dbReference type="GO" id="GO:0042773">
    <property type="term" value="P:ATP synthesis coupled electron transport"/>
    <property type="evidence" value="ECO:0007669"/>
    <property type="project" value="InterPro"/>
</dbReference>
<dbReference type="GO" id="GO:0015990">
    <property type="term" value="P:electron transport coupled proton transport"/>
    <property type="evidence" value="ECO:0007669"/>
    <property type="project" value="TreeGrafter"/>
</dbReference>
<dbReference type="InterPro" id="IPR003918">
    <property type="entry name" value="NADH_UbQ_OxRdtase"/>
</dbReference>
<dbReference type="InterPro" id="IPR001750">
    <property type="entry name" value="ND/Mrp_TM"/>
</dbReference>
<dbReference type="PANTHER" id="PTHR43507">
    <property type="entry name" value="NADH-UBIQUINONE OXIDOREDUCTASE CHAIN 4"/>
    <property type="match status" value="1"/>
</dbReference>
<dbReference type="PANTHER" id="PTHR43507:SF20">
    <property type="entry name" value="NADH-UBIQUINONE OXIDOREDUCTASE CHAIN 4"/>
    <property type="match status" value="1"/>
</dbReference>
<dbReference type="Pfam" id="PF00361">
    <property type="entry name" value="Proton_antipo_M"/>
    <property type="match status" value="1"/>
</dbReference>
<reference key="1">
    <citation type="journal article" date="1995" name="Mol. Biol. Evol.">
        <title>Variations in mitochondrial tRNA gene organization of reptiles as phylogenetic markers.</title>
        <authorList>
            <person name="Kumazawa Y."/>
            <person name="Nishida M."/>
        </authorList>
    </citation>
    <scope>NUCLEOTIDE SEQUENCE [GENOMIC DNA]</scope>
</reference>
<feature type="chain" id="PRO_0000117912" description="NADH-ubiquinone oxidoreductase chain 4">
    <location>
        <begin position="1" status="less than"/>
        <end position="111"/>
    </location>
</feature>
<feature type="transmembrane region" description="Helical" evidence="2">
    <location>
        <begin position="35"/>
        <end position="55"/>
    </location>
</feature>
<feature type="non-terminal residue">
    <location>
        <position position="1"/>
    </location>
</feature>
<comment type="function">
    <text evidence="1">Core subunit of the mitochondrial membrane respiratory chain NADH dehydrogenase (Complex I) that is believed to belong to the minimal assembly required for catalysis. Complex I functions in the transfer of electrons from NADH to the respiratory chain. The immediate electron acceptor for the enzyme is believed to be ubiquinone (By similarity).</text>
</comment>
<comment type="catalytic activity">
    <reaction>
        <text>a ubiquinone + NADH + 5 H(+)(in) = a ubiquinol + NAD(+) + 4 H(+)(out)</text>
        <dbReference type="Rhea" id="RHEA:29091"/>
        <dbReference type="Rhea" id="RHEA-COMP:9565"/>
        <dbReference type="Rhea" id="RHEA-COMP:9566"/>
        <dbReference type="ChEBI" id="CHEBI:15378"/>
        <dbReference type="ChEBI" id="CHEBI:16389"/>
        <dbReference type="ChEBI" id="CHEBI:17976"/>
        <dbReference type="ChEBI" id="CHEBI:57540"/>
        <dbReference type="ChEBI" id="CHEBI:57945"/>
        <dbReference type="EC" id="7.1.1.2"/>
    </reaction>
</comment>
<comment type="subcellular location">
    <subcellularLocation>
        <location evidence="1">Mitochondrion membrane</location>
        <topology evidence="1">Multi-pass membrane protein</topology>
    </subcellularLocation>
</comment>
<comment type="similarity">
    <text evidence="3">Belongs to the complex I subunit 4 family.</text>
</comment>
<organism>
    <name type="scientific">Caiman crocodilus</name>
    <name type="common">Spectacled caiman</name>
    <name type="synonym">Caiman sclerops</name>
    <dbReference type="NCBI Taxonomy" id="8499"/>
    <lineage>
        <taxon>Eukaryota</taxon>
        <taxon>Metazoa</taxon>
        <taxon>Chordata</taxon>
        <taxon>Craniata</taxon>
        <taxon>Vertebrata</taxon>
        <taxon>Euteleostomi</taxon>
        <taxon>Archelosauria</taxon>
        <taxon>Archosauria</taxon>
        <taxon>Crocodylia</taxon>
        <taxon>Alligatoridae</taxon>
        <taxon>Caimaninae</taxon>
        <taxon>Caiman</taxon>
    </lineage>
</organism>